<organism>
    <name type="scientific">Rickettsia bellii (strain OSU 85-389)</name>
    <dbReference type="NCBI Taxonomy" id="391896"/>
    <lineage>
        <taxon>Bacteria</taxon>
        <taxon>Pseudomonadati</taxon>
        <taxon>Pseudomonadota</taxon>
        <taxon>Alphaproteobacteria</taxon>
        <taxon>Rickettsiales</taxon>
        <taxon>Rickettsiaceae</taxon>
        <taxon>Rickettsieae</taxon>
        <taxon>Rickettsia</taxon>
        <taxon>belli group</taxon>
    </lineage>
</organism>
<dbReference type="EMBL" id="CP000849">
    <property type="protein sequence ID" value="ABV78483.1"/>
    <property type="molecule type" value="Genomic_DNA"/>
</dbReference>
<dbReference type="RefSeq" id="WP_011477947.1">
    <property type="nucleotide sequence ID" value="NC_009883.1"/>
</dbReference>
<dbReference type="SMR" id="A8GUI7"/>
<dbReference type="KEGG" id="rbo:A1I_00385"/>
<dbReference type="HOGENOM" id="CLU_111574_0_0_5"/>
<dbReference type="GO" id="GO:0005737">
    <property type="term" value="C:cytoplasm"/>
    <property type="evidence" value="ECO:0007669"/>
    <property type="project" value="UniProtKB-SubCell"/>
</dbReference>
<dbReference type="GO" id="GO:0051082">
    <property type="term" value="F:unfolded protein binding"/>
    <property type="evidence" value="ECO:0007669"/>
    <property type="project" value="InterPro"/>
</dbReference>
<dbReference type="GO" id="GO:0006457">
    <property type="term" value="P:protein folding"/>
    <property type="evidence" value="ECO:0007669"/>
    <property type="project" value="UniProtKB-UniRule"/>
</dbReference>
<dbReference type="GO" id="GO:0051262">
    <property type="term" value="P:protein tetramerization"/>
    <property type="evidence" value="ECO:0007669"/>
    <property type="project" value="InterPro"/>
</dbReference>
<dbReference type="GO" id="GO:0015031">
    <property type="term" value="P:protein transport"/>
    <property type="evidence" value="ECO:0007669"/>
    <property type="project" value="UniProtKB-UniRule"/>
</dbReference>
<dbReference type="CDD" id="cd00557">
    <property type="entry name" value="Translocase_SecB"/>
    <property type="match status" value="1"/>
</dbReference>
<dbReference type="Gene3D" id="3.10.420.10">
    <property type="entry name" value="SecB-like"/>
    <property type="match status" value="1"/>
</dbReference>
<dbReference type="HAMAP" id="MF_00821">
    <property type="entry name" value="SecB"/>
    <property type="match status" value="1"/>
</dbReference>
<dbReference type="InterPro" id="IPR003708">
    <property type="entry name" value="SecB"/>
</dbReference>
<dbReference type="InterPro" id="IPR035958">
    <property type="entry name" value="SecB-like_sf"/>
</dbReference>
<dbReference type="NCBIfam" id="NF004392">
    <property type="entry name" value="PRK05751.1-3"/>
    <property type="match status" value="1"/>
</dbReference>
<dbReference type="NCBIfam" id="TIGR00809">
    <property type="entry name" value="secB"/>
    <property type="match status" value="1"/>
</dbReference>
<dbReference type="PANTHER" id="PTHR36918">
    <property type="match status" value="1"/>
</dbReference>
<dbReference type="PANTHER" id="PTHR36918:SF1">
    <property type="entry name" value="PROTEIN-EXPORT PROTEIN SECB"/>
    <property type="match status" value="1"/>
</dbReference>
<dbReference type="Pfam" id="PF02556">
    <property type="entry name" value="SecB"/>
    <property type="match status" value="1"/>
</dbReference>
<dbReference type="PRINTS" id="PR01594">
    <property type="entry name" value="SECBCHAPRONE"/>
</dbReference>
<dbReference type="SUPFAM" id="SSF54611">
    <property type="entry name" value="SecB-like"/>
    <property type="match status" value="1"/>
</dbReference>
<comment type="function">
    <text evidence="1">One of the proteins required for the normal export of preproteins out of the cell cytoplasm. It is a molecular chaperone that binds to a subset of precursor proteins, maintaining them in a translocation-competent state. It also specifically binds to its receptor SecA.</text>
</comment>
<comment type="subunit">
    <text evidence="1">Homotetramer, a dimer of dimers. One homotetramer interacts with 1 SecA dimer.</text>
</comment>
<comment type="subcellular location">
    <subcellularLocation>
        <location evidence="1">Cytoplasm</location>
    </subcellularLocation>
</comment>
<comment type="similarity">
    <text evidence="1">Belongs to the SecB family.</text>
</comment>
<protein>
    <recommendedName>
        <fullName evidence="1">Protein-export protein SecB</fullName>
    </recommendedName>
</protein>
<evidence type="ECO:0000255" key="1">
    <source>
        <dbReference type="HAMAP-Rule" id="MF_00821"/>
    </source>
</evidence>
<sequence>MSTINTDANEAMPHISVNAQYIKDLSLENPDAPSSLAALEHRPQIDLSLDINITNLSEENFYEVELNIEAVARNEKYKLFQVELKYAGVFNLINIAPEQHQILLSVHCPAMIFPFARKIIASCTQDAGFQPLMIDPIDFGALYHKKMSEHQN</sequence>
<accession>A8GUI7</accession>
<gene>
    <name evidence="1" type="primary">secB</name>
    <name type="ordered locus">A1I_00385</name>
</gene>
<proteinExistence type="inferred from homology"/>
<name>SECB_RICB8</name>
<feature type="chain" id="PRO_1000062511" description="Protein-export protein SecB">
    <location>
        <begin position="1"/>
        <end position="152"/>
    </location>
</feature>
<reference key="1">
    <citation type="submission" date="2007-09" db="EMBL/GenBank/DDBJ databases">
        <title>Complete genome sequencing of Rickettsia bellii.</title>
        <authorList>
            <person name="Madan A."/>
            <person name="Lee H."/>
            <person name="Madan A."/>
            <person name="Yoon J.-G."/>
            <person name="Ryu G.-Y."/>
            <person name="Dasch G."/>
            <person name="Ereemeva M."/>
        </authorList>
    </citation>
    <scope>NUCLEOTIDE SEQUENCE [LARGE SCALE GENOMIC DNA]</scope>
    <source>
        <strain>OSU 85-389</strain>
    </source>
</reference>
<keyword id="KW-0143">Chaperone</keyword>
<keyword id="KW-0963">Cytoplasm</keyword>
<keyword id="KW-0653">Protein transport</keyword>
<keyword id="KW-0811">Translocation</keyword>
<keyword id="KW-0813">Transport</keyword>